<gene>
    <name type="primary">CTS1</name>
    <name type="ORF">CIMG_02795</name>
</gene>
<proteinExistence type="inferred from homology"/>
<accession>Q1E3R8</accession>
<accession>J3KAA2</accession>
<accession>Q400W2</accession>
<accession>Q9C0M7</accession>
<organism>
    <name type="scientific">Coccidioides immitis (strain RS)</name>
    <name type="common">Valley fever fungus</name>
    <dbReference type="NCBI Taxonomy" id="246410"/>
    <lineage>
        <taxon>Eukaryota</taxon>
        <taxon>Fungi</taxon>
        <taxon>Dikarya</taxon>
        <taxon>Ascomycota</taxon>
        <taxon>Pezizomycotina</taxon>
        <taxon>Eurotiomycetes</taxon>
        <taxon>Eurotiomycetidae</taxon>
        <taxon>Onygenales</taxon>
        <taxon>Onygenaceae</taxon>
        <taxon>Coccidioides</taxon>
    </lineage>
</organism>
<sequence>MRFLIGALLTLQTLVQASSMSSMPNSYPVPEAPAEGGFRSVVYFVNWAIYGRGHNPQDLKADQFTHILYAFANIRPSGEVYLSDTWADTDKHYPGDKWDEPGNNVYGCIKQMYLLKKNNRNLKTLLSIGGWTYSPNFKTPASTEEGRKKFADTSLKLMKDLGFDGIDIDWEYPEDEKQANDFVLLLKACREALDAYSAKHPNGKKFLLTIASPAGPQNYNKLKLAEMDKYLDFWNLMAYDFSGSWDKVSGHMSNVFPSTTKPESTPFSSDKAVKDYIKAGVPANKIVLGMPLYGRAFASTDGIGTSFNGVGGGSWENGVWDYKDMPQQGAQVTELEDIAASYSYDKNKRYLISYDTVKIAGKKAEYITKNGMGGGMWWESSSDKTGNESLVGTVVNGLGGTGKLEQRENELSYPESVYDNLKNGMPS</sequence>
<feature type="signal peptide" evidence="1">
    <location>
        <begin position="1"/>
        <end position="17"/>
    </location>
</feature>
<feature type="chain" id="PRO_0000252286" description="Endochitinase 1">
    <location>
        <begin position="18"/>
        <end position="427"/>
    </location>
</feature>
<feature type="domain" description="GH18" evidence="3">
    <location>
        <begin position="38"/>
        <end position="401"/>
    </location>
</feature>
<feature type="active site" description="Proton donor" evidence="3">
    <location>
        <position position="171"/>
    </location>
</feature>
<feature type="binding site" evidence="3">
    <location>
        <begin position="102"/>
        <end position="103"/>
    </location>
    <ligand>
        <name>chitin</name>
        <dbReference type="ChEBI" id="CHEBI:17029"/>
    </ligand>
</feature>
<feature type="binding site" evidence="3">
    <location>
        <begin position="129"/>
        <end position="132"/>
    </location>
    <ligand>
        <name>chitin</name>
        <dbReference type="ChEBI" id="CHEBI:17029"/>
    </ligand>
</feature>
<feature type="binding site" evidence="3">
    <location>
        <position position="172"/>
    </location>
    <ligand>
        <name>chitin</name>
        <dbReference type="ChEBI" id="CHEBI:17029"/>
    </ligand>
</feature>
<feature type="binding site" evidence="3">
    <location>
        <begin position="237"/>
        <end position="240"/>
    </location>
    <ligand>
        <name>chitin</name>
        <dbReference type="ChEBI" id="CHEBI:17029"/>
    </ligand>
</feature>
<feature type="binding site" evidence="3">
    <location>
        <position position="378"/>
    </location>
    <ligand>
        <name>chitin</name>
        <dbReference type="ChEBI" id="CHEBI:17029"/>
    </ligand>
</feature>
<feature type="glycosylation site" description="N-linked (GlcNAc...) asparagine" evidence="2">
    <location>
        <position position="387"/>
    </location>
</feature>
<dbReference type="EC" id="3.2.1.14"/>
<dbReference type="EMBL" id="GG704911">
    <property type="protein sequence ID" value="EAS37441.1"/>
    <property type="molecule type" value="Genomic_DNA"/>
</dbReference>
<dbReference type="EMBL" id="AB232752">
    <property type="protein sequence ID" value="BAE20296.1"/>
    <property type="status" value="ALT_SEQ"/>
    <property type="molecule type" value="Genomic_DNA"/>
</dbReference>
<dbReference type="EMBL" id="AB232753">
    <property type="protein sequence ID" value="BAE20297.1"/>
    <property type="status" value="ALT_SEQ"/>
    <property type="molecule type" value="Genomic_DNA"/>
</dbReference>
<dbReference type="EMBL" id="AB232755">
    <property type="protein sequence ID" value="BAE20299.1"/>
    <property type="status" value="ALT_SEQ"/>
    <property type="molecule type" value="Genomic_DNA"/>
</dbReference>
<dbReference type="EMBL" id="AB232756">
    <property type="protein sequence ID" value="BAE20300.1"/>
    <property type="status" value="ALT_SEQ"/>
    <property type="molecule type" value="Genomic_DNA"/>
</dbReference>
<dbReference type="EMBL" id="AB232759">
    <property type="protein sequence ID" value="BAE20303.1"/>
    <property type="status" value="ALT_SEQ"/>
    <property type="molecule type" value="Genomic_DNA"/>
</dbReference>
<dbReference type="EMBL" id="AJ408865">
    <property type="protein sequence ID" value="CAC29131.1"/>
    <property type="molecule type" value="Genomic_DNA"/>
</dbReference>
<dbReference type="EMBL" id="AJ408866">
    <property type="protein sequence ID" value="CAC29132.1"/>
    <property type="molecule type" value="Genomic_DNA"/>
</dbReference>
<dbReference type="EMBL" id="AJ408867">
    <property type="protein sequence ID" value="CAC29133.1"/>
    <property type="molecule type" value="Genomic_DNA"/>
</dbReference>
<dbReference type="RefSeq" id="XP_001249024.1">
    <property type="nucleotide sequence ID" value="XM_001249023.2"/>
</dbReference>
<dbReference type="SMR" id="Q1E3R8"/>
<dbReference type="FunCoup" id="Q1E3R8">
    <property type="interactions" value="557"/>
</dbReference>
<dbReference type="STRING" id="246410.Q1E3R8"/>
<dbReference type="CAZy" id="GH18">
    <property type="family name" value="Glycoside Hydrolase Family 18"/>
</dbReference>
<dbReference type="GlyCosmos" id="Q1E3R8">
    <property type="glycosylation" value="1 site, No reported glycans"/>
</dbReference>
<dbReference type="GeneID" id="4566471"/>
<dbReference type="KEGG" id="cim:CIMG_02795"/>
<dbReference type="VEuPathDB" id="FungiDB:CIMG_02795"/>
<dbReference type="InParanoid" id="Q1E3R8"/>
<dbReference type="OMA" id="FIQHCQA"/>
<dbReference type="OrthoDB" id="76388at2759"/>
<dbReference type="Proteomes" id="UP000001261">
    <property type="component" value="Unassembled WGS sequence"/>
</dbReference>
<dbReference type="GO" id="GO:0005576">
    <property type="term" value="C:extracellular region"/>
    <property type="evidence" value="ECO:0007669"/>
    <property type="project" value="TreeGrafter"/>
</dbReference>
<dbReference type="GO" id="GO:0008061">
    <property type="term" value="F:chitin binding"/>
    <property type="evidence" value="ECO:0007669"/>
    <property type="project" value="UniProtKB-KW"/>
</dbReference>
<dbReference type="GO" id="GO:0008843">
    <property type="term" value="F:endochitinase activity"/>
    <property type="evidence" value="ECO:0007669"/>
    <property type="project" value="UniProtKB-EC"/>
</dbReference>
<dbReference type="GO" id="GO:0006032">
    <property type="term" value="P:chitin catabolic process"/>
    <property type="evidence" value="ECO:0007669"/>
    <property type="project" value="UniProtKB-KW"/>
</dbReference>
<dbReference type="GO" id="GO:0000272">
    <property type="term" value="P:polysaccharide catabolic process"/>
    <property type="evidence" value="ECO:0007669"/>
    <property type="project" value="UniProtKB-KW"/>
</dbReference>
<dbReference type="CDD" id="cd06548">
    <property type="entry name" value="GH18_chitinase"/>
    <property type="match status" value="1"/>
</dbReference>
<dbReference type="FunFam" id="3.10.50.10:FF:000005">
    <property type="entry name" value="Endochitinase B1"/>
    <property type="match status" value="1"/>
</dbReference>
<dbReference type="FunFam" id="3.20.20.80:FF:000095">
    <property type="entry name" value="Endochitinase B1"/>
    <property type="match status" value="1"/>
</dbReference>
<dbReference type="Gene3D" id="3.10.50.10">
    <property type="match status" value="1"/>
</dbReference>
<dbReference type="Gene3D" id="3.20.20.80">
    <property type="entry name" value="Glycosidases"/>
    <property type="match status" value="1"/>
</dbReference>
<dbReference type="InterPro" id="IPR011583">
    <property type="entry name" value="Chitinase_II/V-like_cat"/>
</dbReference>
<dbReference type="InterPro" id="IPR029070">
    <property type="entry name" value="Chitinase_insertion_sf"/>
</dbReference>
<dbReference type="InterPro" id="IPR001223">
    <property type="entry name" value="Glyco_hydro18_cat"/>
</dbReference>
<dbReference type="InterPro" id="IPR001579">
    <property type="entry name" value="Glyco_hydro_18_chit_AS"/>
</dbReference>
<dbReference type="InterPro" id="IPR017853">
    <property type="entry name" value="Glycoside_hydrolase_SF"/>
</dbReference>
<dbReference type="InterPro" id="IPR050314">
    <property type="entry name" value="Glycosyl_Hydrlase_18"/>
</dbReference>
<dbReference type="PANTHER" id="PTHR11177">
    <property type="entry name" value="CHITINASE"/>
    <property type="match status" value="1"/>
</dbReference>
<dbReference type="PANTHER" id="PTHR11177:SF317">
    <property type="entry name" value="CHITINASE 12-RELATED"/>
    <property type="match status" value="1"/>
</dbReference>
<dbReference type="Pfam" id="PF00704">
    <property type="entry name" value="Glyco_hydro_18"/>
    <property type="match status" value="1"/>
</dbReference>
<dbReference type="SMART" id="SM00636">
    <property type="entry name" value="Glyco_18"/>
    <property type="match status" value="1"/>
</dbReference>
<dbReference type="SUPFAM" id="SSF51445">
    <property type="entry name" value="(Trans)glycosidases"/>
    <property type="match status" value="1"/>
</dbReference>
<dbReference type="SUPFAM" id="SSF54556">
    <property type="entry name" value="Chitinase insertion domain"/>
    <property type="match status" value="1"/>
</dbReference>
<dbReference type="PROSITE" id="PS01095">
    <property type="entry name" value="GH18_1"/>
    <property type="match status" value="1"/>
</dbReference>
<dbReference type="PROSITE" id="PS51910">
    <property type="entry name" value="GH18_2"/>
    <property type="match status" value="1"/>
</dbReference>
<name>CHI1_COCIM</name>
<protein>
    <recommendedName>
        <fullName>Endochitinase 1</fullName>
        <ecNumber>3.2.1.14</ecNumber>
    </recommendedName>
    <alternativeName>
        <fullName>Complement-fixation antigen</fullName>
        <shortName>CF-AG</shortName>
        <shortName>CF-antigen</shortName>
    </alternativeName>
</protein>
<comment type="catalytic activity">
    <reaction>
        <text>Random endo-hydrolysis of N-acetyl-beta-D-glucosaminide (1-&gt;4)-beta-linkages in chitin and chitodextrins.</text>
        <dbReference type="EC" id="3.2.1.14"/>
    </reaction>
</comment>
<comment type="similarity">
    <text evidence="4">Belongs to the glycosyl hydrolase 18 family. Chitinase class V subfamily.</text>
</comment>
<comment type="sequence caution" evidence="4">
    <conflict type="erroneous gene model prediction">
        <sequence resource="EMBL-CDS" id="BAE20296"/>
    </conflict>
</comment>
<comment type="sequence caution" evidence="4">
    <conflict type="erroneous gene model prediction">
        <sequence resource="EMBL-CDS" id="BAE20297"/>
    </conflict>
</comment>
<comment type="sequence caution" evidence="4">
    <conflict type="erroneous gene model prediction">
        <sequence resource="EMBL-CDS" id="BAE20299"/>
    </conflict>
</comment>
<comment type="sequence caution" evidence="4">
    <conflict type="erroneous gene model prediction">
        <sequence resource="EMBL-CDS" id="BAE20300"/>
    </conflict>
</comment>
<comment type="sequence caution" evidence="4">
    <conflict type="erroneous gene model prediction">
        <sequence resource="EMBL-CDS" id="BAE20303"/>
    </conflict>
</comment>
<reference key="1">
    <citation type="journal article" date="2009" name="Genome Res.">
        <title>Comparative genomic analyses of the human fungal pathogens Coccidioides and their relatives.</title>
        <authorList>
            <person name="Sharpton T.J."/>
            <person name="Stajich J.E."/>
            <person name="Rounsley S.D."/>
            <person name="Gardner M.J."/>
            <person name="Wortman J.R."/>
            <person name="Jordar V.S."/>
            <person name="Maiti R."/>
            <person name="Kodira C.D."/>
            <person name="Neafsey D.E."/>
            <person name="Zeng Q."/>
            <person name="Hung C.-Y."/>
            <person name="McMahan C."/>
            <person name="Muszewska A."/>
            <person name="Grynberg M."/>
            <person name="Mandel M.A."/>
            <person name="Kellner E.M."/>
            <person name="Barker B.M."/>
            <person name="Galgiani J.N."/>
            <person name="Orbach M.J."/>
            <person name="Kirkland T.N."/>
            <person name="Cole G.T."/>
            <person name="Henn M.R."/>
            <person name="Birren B.W."/>
            <person name="Taylor J.W."/>
        </authorList>
    </citation>
    <scope>NUCLEOTIDE SEQUENCE [LARGE SCALE GENOMIC DNA]</scope>
    <source>
        <strain>RS</strain>
    </source>
</reference>
<reference key="2">
    <citation type="journal article" date="2010" name="Genome Res.">
        <title>Population genomic sequencing of Coccidioides fungi reveals recent hybridization and transposon control.</title>
        <authorList>
            <person name="Neafsey D.E."/>
            <person name="Barker B.M."/>
            <person name="Sharpton T.J."/>
            <person name="Stajich J.E."/>
            <person name="Park D.J."/>
            <person name="Whiston E."/>
            <person name="Hung C.-Y."/>
            <person name="McMahan C."/>
            <person name="White J."/>
            <person name="Sykes S."/>
            <person name="Heiman D."/>
            <person name="Young S."/>
            <person name="Zeng Q."/>
            <person name="Abouelleil A."/>
            <person name="Aftuck L."/>
            <person name="Bessette D."/>
            <person name="Brown A."/>
            <person name="FitzGerald M."/>
            <person name="Lui A."/>
            <person name="Macdonald J.P."/>
            <person name="Priest M."/>
            <person name="Orbach M.J."/>
            <person name="Galgiani J.N."/>
            <person name="Kirkland T.N."/>
            <person name="Cole G.T."/>
            <person name="Birren B.W."/>
            <person name="Henn M.R."/>
            <person name="Taylor J.W."/>
            <person name="Rounsley S.D."/>
        </authorList>
    </citation>
    <scope>GENOME REANNOTATION</scope>
    <source>
        <strain>RS</strain>
    </source>
</reference>
<reference key="3">
    <citation type="journal article" date="2006" name="Nippon Ishinkin Gakkai Zasshi">
        <title>Reexamination of Coccidioides spp. reserved in the Research Center for Pathogenic Fungi and Microbial Toxicoses, Chiba University, based on a multiple gene analysis.</title>
        <authorList>
            <person name="Sano A."/>
            <person name="Miyaji M."/>
            <person name="Kamei K."/>
            <person name="Mikami Y."/>
            <person name="Nishimura K."/>
        </authorList>
    </citation>
    <scope>NUCLEOTIDE SEQUENCE [GENOMIC DNA] OF 11-151</scope>
    <source>
        <strain>IFM 45815</strain>
        <strain>IFM 45816</strain>
        <strain>IFM 46868</strain>
        <strain>IFM 50992</strain>
        <strain>IFM 50995</strain>
    </source>
</reference>
<reference key="4">
    <citation type="journal article" date="1997" name="Proc. Natl. Acad. Sci. U.S.A.">
        <title>Concordance of gene genealogies reveals reproductive isolation in the pathogenic fungus Coccidioides immitis.</title>
        <authorList>
            <person name="Koufopanou V."/>
            <person name="Burt A."/>
            <person name="Taylor J.W."/>
        </authorList>
    </citation>
    <scope>NUCLEOTIDE SEQUENCE [GENOMIC DNA] OF 19-145</scope>
    <source>
        <strain>RMSCC 1694 / CA2</strain>
        <strain>RMSCC 2019 / CA4</strain>
        <strain>RMSCC 2267 / CA1</strain>
    </source>
</reference>
<reference key="5">
    <citation type="journal article" date="1998" name="Proc. Natl. Acad. Sci. U.S.A.">
        <authorList>
            <person name="Koufopanou V."/>
            <person name="Burt A."/>
            <person name="Taylor J.W."/>
        </authorList>
    </citation>
    <scope>ERRATUM OF PUBMED:9144263</scope>
</reference>
<keyword id="KW-0119">Carbohydrate metabolism</keyword>
<keyword id="KW-0146">Chitin degradation</keyword>
<keyword id="KW-0147">Chitin-binding</keyword>
<keyword id="KW-0325">Glycoprotein</keyword>
<keyword id="KW-0326">Glycosidase</keyword>
<keyword id="KW-0378">Hydrolase</keyword>
<keyword id="KW-0624">Polysaccharide degradation</keyword>
<keyword id="KW-1185">Reference proteome</keyword>
<keyword id="KW-0732">Signal</keyword>
<evidence type="ECO:0000250" key="1"/>
<evidence type="ECO:0000255" key="2"/>
<evidence type="ECO:0000255" key="3">
    <source>
        <dbReference type="PROSITE-ProRule" id="PRU01258"/>
    </source>
</evidence>
<evidence type="ECO:0000305" key="4"/>